<gene>
    <name evidence="1" type="primary">hisG</name>
    <name type="ordered locus">BDI_0966</name>
</gene>
<comment type="function">
    <text evidence="1">Catalyzes the condensation of ATP and 5-phosphoribose 1-diphosphate to form N'-(5'-phosphoribosyl)-ATP (PR-ATP). Has a crucial role in the pathway because the rate of histidine biosynthesis seems to be controlled primarily by regulation of HisG enzymatic activity.</text>
</comment>
<comment type="catalytic activity">
    <reaction evidence="1">
        <text>1-(5-phospho-beta-D-ribosyl)-ATP + diphosphate = 5-phospho-alpha-D-ribose 1-diphosphate + ATP</text>
        <dbReference type="Rhea" id="RHEA:18473"/>
        <dbReference type="ChEBI" id="CHEBI:30616"/>
        <dbReference type="ChEBI" id="CHEBI:33019"/>
        <dbReference type="ChEBI" id="CHEBI:58017"/>
        <dbReference type="ChEBI" id="CHEBI:73183"/>
        <dbReference type="EC" id="2.4.2.17"/>
    </reaction>
</comment>
<comment type="cofactor">
    <cofactor evidence="1">
        <name>Mg(2+)</name>
        <dbReference type="ChEBI" id="CHEBI:18420"/>
    </cofactor>
</comment>
<comment type="activity regulation">
    <text evidence="1">Feedback inhibited by histidine.</text>
</comment>
<comment type="pathway">
    <text evidence="1">Amino-acid biosynthesis; L-histidine biosynthesis; L-histidine from 5-phospho-alpha-D-ribose 1-diphosphate: step 1/9.</text>
</comment>
<comment type="subcellular location">
    <subcellularLocation>
        <location evidence="1">Cytoplasm</location>
    </subcellularLocation>
</comment>
<comment type="similarity">
    <text evidence="1">Belongs to the ATP phosphoribosyltransferase family. Long subfamily.</text>
</comment>
<dbReference type="EC" id="2.4.2.17" evidence="1"/>
<dbReference type="EMBL" id="CP000140">
    <property type="protein sequence ID" value="ABR42734.1"/>
    <property type="molecule type" value="Genomic_DNA"/>
</dbReference>
<dbReference type="RefSeq" id="WP_008779818.1">
    <property type="nucleotide sequence ID" value="NZ_LR215978.1"/>
</dbReference>
<dbReference type="SMR" id="A6LAM0"/>
<dbReference type="STRING" id="435591.BDI_0966"/>
<dbReference type="PaxDb" id="435591-BDI_0966"/>
<dbReference type="KEGG" id="pdi:BDI_0966"/>
<dbReference type="eggNOG" id="COG0040">
    <property type="taxonomic scope" value="Bacteria"/>
</dbReference>
<dbReference type="HOGENOM" id="CLU_038115_1_0_10"/>
<dbReference type="BioCyc" id="PDIS435591:G1G5A-1001-MONOMER"/>
<dbReference type="UniPathway" id="UPA00031">
    <property type="reaction ID" value="UER00006"/>
</dbReference>
<dbReference type="Proteomes" id="UP000000566">
    <property type="component" value="Chromosome"/>
</dbReference>
<dbReference type="GO" id="GO:0005737">
    <property type="term" value="C:cytoplasm"/>
    <property type="evidence" value="ECO:0007669"/>
    <property type="project" value="UniProtKB-SubCell"/>
</dbReference>
<dbReference type="GO" id="GO:0005524">
    <property type="term" value="F:ATP binding"/>
    <property type="evidence" value="ECO:0007669"/>
    <property type="project" value="UniProtKB-KW"/>
</dbReference>
<dbReference type="GO" id="GO:0003879">
    <property type="term" value="F:ATP phosphoribosyltransferase activity"/>
    <property type="evidence" value="ECO:0007669"/>
    <property type="project" value="UniProtKB-UniRule"/>
</dbReference>
<dbReference type="GO" id="GO:0000287">
    <property type="term" value="F:magnesium ion binding"/>
    <property type="evidence" value="ECO:0007669"/>
    <property type="project" value="UniProtKB-UniRule"/>
</dbReference>
<dbReference type="GO" id="GO:0000105">
    <property type="term" value="P:L-histidine biosynthetic process"/>
    <property type="evidence" value="ECO:0007669"/>
    <property type="project" value="UniProtKB-UniRule"/>
</dbReference>
<dbReference type="FunFam" id="3.30.70.120:FF:000002">
    <property type="entry name" value="ATP phosphoribosyltransferase"/>
    <property type="match status" value="1"/>
</dbReference>
<dbReference type="FunFam" id="3.40.190.10:FF:000008">
    <property type="entry name" value="ATP phosphoribosyltransferase"/>
    <property type="match status" value="1"/>
</dbReference>
<dbReference type="Gene3D" id="3.30.70.120">
    <property type="match status" value="1"/>
</dbReference>
<dbReference type="Gene3D" id="3.40.190.10">
    <property type="entry name" value="Periplasmic binding protein-like II"/>
    <property type="match status" value="2"/>
</dbReference>
<dbReference type="HAMAP" id="MF_00079">
    <property type="entry name" value="HisG_Long"/>
    <property type="match status" value="1"/>
</dbReference>
<dbReference type="InterPro" id="IPR020621">
    <property type="entry name" value="ATP-PRT_HisG_long"/>
</dbReference>
<dbReference type="InterPro" id="IPR013820">
    <property type="entry name" value="ATP_PRibTrfase_cat"/>
</dbReference>
<dbReference type="InterPro" id="IPR018198">
    <property type="entry name" value="ATP_PRibTrfase_CS"/>
</dbReference>
<dbReference type="InterPro" id="IPR001348">
    <property type="entry name" value="ATP_PRibTrfase_HisG"/>
</dbReference>
<dbReference type="InterPro" id="IPR013115">
    <property type="entry name" value="HisG_C"/>
</dbReference>
<dbReference type="InterPro" id="IPR011322">
    <property type="entry name" value="N-reg_PII-like_a/b"/>
</dbReference>
<dbReference type="InterPro" id="IPR015867">
    <property type="entry name" value="N-reg_PII/ATP_PRibTrfase_C"/>
</dbReference>
<dbReference type="NCBIfam" id="TIGR00070">
    <property type="entry name" value="hisG"/>
    <property type="match status" value="1"/>
</dbReference>
<dbReference type="NCBIfam" id="TIGR03455">
    <property type="entry name" value="HisG_C-term"/>
    <property type="match status" value="1"/>
</dbReference>
<dbReference type="PANTHER" id="PTHR21403:SF8">
    <property type="entry name" value="ATP PHOSPHORIBOSYLTRANSFERASE"/>
    <property type="match status" value="1"/>
</dbReference>
<dbReference type="PANTHER" id="PTHR21403">
    <property type="entry name" value="ATP PHOSPHORIBOSYLTRANSFERASE ATP-PRTASE"/>
    <property type="match status" value="1"/>
</dbReference>
<dbReference type="Pfam" id="PF01634">
    <property type="entry name" value="HisG"/>
    <property type="match status" value="1"/>
</dbReference>
<dbReference type="Pfam" id="PF08029">
    <property type="entry name" value="HisG_C"/>
    <property type="match status" value="1"/>
</dbReference>
<dbReference type="SUPFAM" id="SSF54913">
    <property type="entry name" value="GlnB-like"/>
    <property type="match status" value="1"/>
</dbReference>
<dbReference type="SUPFAM" id="SSF53850">
    <property type="entry name" value="Periplasmic binding protein-like II"/>
    <property type="match status" value="1"/>
</dbReference>
<dbReference type="PROSITE" id="PS01316">
    <property type="entry name" value="ATP_P_PHORIBOSYLTR"/>
    <property type="match status" value="1"/>
</dbReference>
<feature type="chain" id="PRO_1000004484" description="ATP phosphoribosyltransferase">
    <location>
        <begin position="1"/>
        <end position="283"/>
    </location>
</feature>
<evidence type="ECO:0000255" key="1">
    <source>
        <dbReference type="HAMAP-Rule" id="MF_00079"/>
    </source>
</evidence>
<name>HIS1_PARD8</name>
<sequence>MLRIAVQSKGRLYDETMMLLEEAGIKLNRGKRILLLSAKGFPVEVLFLRDDDIPQSVANGVADIGIVGENEYVEKGQEAKLIKRLGFSKCRLSLAIPKDEEYKGAEWFEGKTIATSYPAILRSFLEERGVKADIHVISGSVEIAPGIGLADAIFDIVSSGSTLVSNQLREVEVVLPCEALLIANNNLSKEKLEILDELLFRFEAIQVAEGKKYVLLNAPKEKLDEIIEVLPGMKSPTITPLANDEWVSVQSVIAEKHFWEIIGKLKSLGAEGILVLPIEKMIV</sequence>
<protein>
    <recommendedName>
        <fullName evidence="1">ATP phosphoribosyltransferase</fullName>
        <shortName evidence="1">ATP-PRT</shortName>
        <shortName evidence="1">ATP-PRTase</shortName>
        <ecNumber evidence="1">2.4.2.17</ecNumber>
    </recommendedName>
</protein>
<proteinExistence type="inferred from homology"/>
<organism>
    <name type="scientific">Parabacteroides distasonis (strain ATCC 8503 / DSM 20701 / CIP 104284 / JCM 5825 / NCTC 11152)</name>
    <dbReference type="NCBI Taxonomy" id="435591"/>
    <lineage>
        <taxon>Bacteria</taxon>
        <taxon>Pseudomonadati</taxon>
        <taxon>Bacteroidota</taxon>
        <taxon>Bacteroidia</taxon>
        <taxon>Bacteroidales</taxon>
        <taxon>Tannerellaceae</taxon>
        <taxon>Parabacteroides</taxon>
    </lineage>
</organism>
<reference key="1">
    <citation type="journal article" date="2007" name="PLoS Biol.">
        <title>Evolution of symbiotic bacteria in the distal human intestine.</title>
        <authorList>
            <person name="Xu J."/>
            <person name="Mahowald M.A."/>
            <person name="Ley R.E."/>
            <person name="Lozupone C.A."/>
            <person name="Hamady M."/>
            <person name="Martens E.C."/>
            <person name="Henrissat B."/>
            <person name="Coutinho P.M."/>
            <person name="Minx P."/>
            <person name="Latreille P."/>
            <person name="Cordum H."/>
            <person name="Van Brunt A."/>
            <person name="Kim K."/>
            <person name="Fulton R.S."/>
            <person name="Fulton L.A."/>
            <person name="Clifton S.W."/>
            <person name="Wilson R.K."/>
            <person name="Knight R.D."/>
            <person name="Gordon J.I."/>
        </authorList>
    </citation>
    <scope>NUCLEOTIDE SEQUENCE [LARGE SCALE GENOMIC DNA]</scope>
    <source>
        <strain>ATCC 8503 / DSM 20701 / CIP 104284 / JCM 5825 / NCTC 11152</strain>
    </source>
</reference>
<accession>A6LAM0</accession>
<keyword id="KW-0028">Amino-acid biosynthesis</keyword>
<keyword id="KW-0067">ATP-binding</keyword>
<keyword id="KW-0963">Cytoplasm</keyword>
<keyword id="KW-0328">Glycosyltransferase</keyword>
<keyword id="KW-0368">Histidine biosynthesis</keyword>
<keyword id="KW-0460">Magnesium</keyword>
<keyword id="KW-0479">Metal-binding</keyword>
<keyword id="KW-0547">Nucleotide-binding</keyword>
<keyword id="KW-1185">Reference proteome</keyword>
<keyword id="KW-0808">Transferase</keyword>